<accession>Q5HCP4</accession>
<organism>
    <name type="scientific">Staphylococcus aureus (strain COL)</name>
    <dbReference type="NCBI Taxonomy" id="93062"/>
    <lineage>
        <taxon>Bacteria</taxon>
        <taxon>Bacillati</taxon>
        <taxon>Bacillota</taxon>
        <taxon>Bacilli</taxon>
        <taxon>Bacillales</taxon>
        <taxon>Staphylococcaceae</taxon>
        <taxon>Staphylococcus</taxon>
    </lineage>
</organism>
<reference key="1">
    <citation type="journal article" date="2005" name="J. Bacteriol.">
        <title>Insights on evolution of virulence and resistance from the complete genome analysis of an early methicillin-resistant Staphylococcus aureus strain and a biofilm-producing methicillin-resistant Staphylococcus epidermidis strain.</title>
        <authorList>
            <person name="Gill S.R."/>
            <person name="Fouts D.E."/>
            <person name="Archer G.L."/>
            <person name="Mongodin E.F."/>
            <person name="DeBoy R.T."/>
            <person name="Ravel J."/>
            <person name="Paulsen I.T."/>
            <person name="Kolonay J.F."/>
            <person name="Brinkac L.M."/>
            <person name="Beanan M.J."/>
            <person name="Dodson R.J."/>
            <person name="Daugherty S.C."/>
            <person name="Madupu R."/>
            <person name="Angiuoli S.V."/>
            <person name="Durkin A.S."/>
            <person name="Haft D.H."/>
            <person name="Vamathevan J.J."/>
            <person name="Khouri H."/>
            <person name="Utterback T.R."/>
            <person name="Lee C."/>
            <person name="Dimitrov G."/>
            <person name="Jiang L."/>
            <person name="Qin H."/>
            <person name="Weidman J."/>
            <person name="Tran K."/>
            <person name="Kang K.H."/>
            <person name="Hance I.R."/>
            <person name="Nelson K.E."/>
            <person name="Fraser C.M."/>
        </authorList>
    </citation>
    <scope>NUCLEOTIDE SEQUENCE [LARGE SCALE GENOMIC DNA]</scope>
    <source>
        <strain>COL</strain>
    </source>
</reference>
<evidence type="ECO:0000255" key="1">
    <source>
        <dbReference type="HAMAP-Rule" id="MF_01466"/>
    </source>
</evidence>
<gene>
    <name evidence="1" type="primary">secY2</name>
    <name type="ordered locus">SACOL2675</name>
</gene>
<name>SECY2_STAAC</name>
<feature type="chain" id="PRO_0000414866" description="Accessory Sec system protein translocase subunit SecY2">
    <location>
        <begin position="1"/>
        <end position="403"/>
    </location>
</feature>
<feature type="transmembrane region" description="Helical" evidence="1">
    <location>
        <begin position="17"/>
        <end position="37"/>
    </location>
</feature>
<feature type="transmembrane region" description="Helical" evidence="1">
    <location>
        <begin position="63"/>
        <end position="83"/>
    </location>
</feature>
<feature type="transmembrane region" description="Helical" evidence="1">
    <location>
        <begin position="105"/>
        <end position="125"/>
    </location>
</feature>
<feature type="transmembrane region" description="Helical" evidence="1">
    <location>
        <begin position="131"/>
        <end position="151"/>
    </location>
</feature>
<feature type="transmembrane region" description="Helical" evidence="1">
    <location>
        <begin position="157"/>
        <end position="177"/>
    </location>
</feature>
<feature type="transmembrane region" description="Helical" evidence="1">
    <location>
        <begin position="186"/>
        <end position="206"/>
    </location>
</feature>
<feature type="transmembrane region" description="Helical" evidence="1">
    <location>
        <begin position="240"/>
        <end position="260"/>
    </location>
</feature>
<feature type="transmembrane region" description="Helical" evidence="1">
    <location>
        <begin position="276"/>
        <end position="296"/>
    </location>
</feature>
<feature type="transmembrane region" description="Helical" evidence="1">
    <location>
        <begin position="339"/>
        <end position="359"/>
    </location>
</feature>
<feature type="transmembrane region" description="Helical" evidence="1">
    <location>
        <begin position="366"/>
        <end position="386"/>
    </location>
</feature>
<comment type="function">
    <text evidence="1">Part of the accessory SecA2/SecY2 system specifically required for export of possible cell wall proteins. The central subunit of a protein translocation channel.</text>
</comment>
<comment type="subunit">
    <text evidence="1">Component of the accessory SecA2/SecY2 protein translocase complex required to export cell wall proteins. May form heterotrimers with SecE and SecG subunits.</text>
</comment>
<comment type="subcellular location">
    <subcellularLocation>
        <location evidence="1">Cell membrane</location>
        <topology evidence="1">Multi-pass membrane protein</topology>
    </subcellularLocation>
</comment>
<comment type="similarity">
    <text evidence="1">Belongs to the SecY/SEC61-alpha family. SecY2 subfamily.</text>
</comment>
<protein>
    <recommendedName>
        <fullName evidence="1">Accessory Sec system protein translocase subunit SecY2</fullName>
    </recommendedName>
</protein>
<sequence>MLKLLQQYEYKIIYKRMLYTCFILFIYILGTNISIVSYNDMQVKHESFFKIAISNMGGDVNTLNIFTLGLGPWLTSMIILMLISYRNMDKYMKQTSLEKHYKERILTLILSVIQSYFVIHEYVSKERVHQDNIYLTILILVTGTMLLVWLADKNSRYGIAGPMPIVMVSIIKSMMHQKMEYIDASHIVIALLIILVIITLFILLFIELVEVRIPYIDLMNVSATNMKSYLSWKVNPAGSITLMMSISAFVFLKSGIHFILSMFNKSISDDMPMLTFDSPVGISVYLVIQMLLGYFLSRFLINTKQKSKDFLKSGNYFSGVKPGKDTERYLNYQARRVCWFGLALVTVIIGIPLYFTLFVPHLSTEIYFSVQLIVLVYISINIAETIRTYLYFDKYKPFLNQYW</sequence>
<proteinExistence type="inferred from homology"/>
<dbReference type="EMBL" id="CP000046">
    <property type="protein sequence ID" value="AAW38673.1"/>
    <property type="molecule type" value="Genomic_DNA"/>
</dbReference>
<dbReference type="RefSeq" id="WP_000916119.1">
    <property type="nucleotide sequence ID" value="NZ_JBGOFO010000001.1"/>
</dbReference>
<dbReference type="SMR" id="Q5HCP4"/>
<dbReference type="KEGG" id="sac:SACOL2675"/>
<dbReference type="HOGENOM" id="CLU_030313_4_0_9"/>
<dbReference type="Proteomes" id="UP000000530">
    <property type="component" value="Chromosome"/>
</dbReference>
<dbReference type="GO" id="GO:0005886">
    <property type="term" value="C:plasma membrane"/>
    <property type="evidence" value="ECO:0007669"/>
    <property type="project" value="UniProtKB-SubCell"/>
</dbReference>
<dbReference type="GO" id="GO:0065002">
    <property type="term" value="P:intracellular protein transmembrane transport"/>
    <property type="evidence" value="ECO:0007669"/>
    <property type="project" value="UniProtKB-UniRule"/>
</dbReference>
<dbReference type="GO" id="GO:0006605">
    <property type="term" value="P:protein targeting"/>
    <property type="evidence" value="ECO:0007669"/>
    <property type="project" value="UniProtKB-UniRule"/>
</dbReference>
<dbReference type="FunFam" id="1.10.3370.10:FF:000015">
    <property type="entry name" value="Accessory Sec system protein translocase subunit SecY2"/>
    <property type="match status" value="1"/>
</dbReference>
<dbReference type="Gene3D" id="1.10.3370.10">
    <property type="entry name" value="SecY subunit domain"/>
    <property type="match status" value="1"/>
</dbReference>
<dbReference type="HAMAP" id="MF_01466">
    <property type="entry name" value="SecY2"/>
    <property type="match status" value="1"/>
</dbReference>
<dbReference type="InterPro" id="IPR002208">
    <property type="entry name" value="SecY/SEC61-alpha"/>
</dbReference>
<dbReference type="InterPro" id="IPR014269">
    <property type="entry name" value="SecY2"/>
</dbReference>
<dbReference type="InterPro" id="IPR023201">
    <property type="entry name" value="SecY_dom_sf"/>
</dbReference>
<dbReference type="NCBIfam" id="TIGR02920">
    <property type="entry name" value="acc_sec_Y2"/>
    <property type="match status" value="1"/>
</dbReference>
<dbReference type="NCBIfam" id="NF009082">
    <property type="entry name" value="PRK12417.1"/>
    <property type="match status" value="1"/>
</dbReference>
<dbReference type="Pfam" id="PF00344">
    <property type="entry name" value="SecY"/>
    <property type="match status" value="1"/>
</dbReference>
<dbReference type="PIRSF" id="PIRSF004557">
    <property type="entry name" value="SecY"/>
    <property type="match status" value="1"/>
</dbReference>
<dbReference type="PRINTS" id="PR00303">
    <property type="entry name" value="SECYTRNLCASE"/>
</dbReference>
<dbReference type="SUPFAM" id="SSF103491">
    <property type="entry name" value="Preprotein translocase SecY subunit"/>
    <property type="match status" value="1"/>
</dbReference>
<keyword id="KW-1003">Cell membrane</keyword>
<keyword id="KW-0472">Membrane</keyword>
<keyword id="KW-0653">Protein transport</keyword>
<keyword id="KW-0811">Translocation</keyword>
<keyword id="KW-0812">Transmembrane</keyword>
<keyword id="KW-1133">Transmembrane helix</keyword>
<keyword id="KW-0813">Transport</keyword>